<accession>P43008</accession>
<comment type="function">
    <text evidence="1">Involved in the TonB-dependent energy-dependent transport of various receptor-bound substrates. Protects ExbD from proteolytic degradation and functionally stabilizes TonB (By similarity).</text>
</comment>
<comment type="subunit">
    <text evidence="1">The accessory proteins ExbB and ExbD seem to form a complex with TonB.</text>
</comment>
<comment type="subcellular location">
    <subcellularLocation>
        <location>Cell inner membrane</location>
        <topology>Multi-pass membrane protein</topology>
    </subcellularLocation>
</comment>
<comment type="similarity">
    <text evidence="3">Belongs to the ExbB/TolQ family.</text>
</comment>
<reference key="1">
    <citation type="journal article" date="1995" name="Gene">
        <title>Cloning and sequencing of the Haemophilus influenzae exbB and exbD genes.</title>
        <authorList>
            <person name="Jarosik G.P."/>
            <person name="Hansen E.J."/>
        </authorList>
    </citation>
    <scope>NUCLEOTIDE SEQUENCE [GENOMIC DNA]</scope>
    <source>
        <strain>NTHi TN106</strain>
    </source>
</reference>
<reference key="2">
    <citation type="journal article" date="1995" name="Science">
        <title>Whole-genome random sequencing and assembly of Haemophilus influenzae Rd.</title>
        <authorList>
            <person name="Fleischmann R.D."/>
            <person name="Adams M.D."/>
            <person name="White O."/>
            <person name="Clayton R.A."/>
            <person name="Kirkness E.F."/>
            <person name="Kerlavage A.R."/>
            <person name="Bult C.J."/>
            <person name="Tomb J.-F."/>
            <person name="Dougherty B.A."/>
            <person name="Merrick J.M."/>
            <person name="McKenney K."/>
            <person name="Sutton G.G."/>
            <person name="FitzHugh W."/>
            <person name="Fields C.A."/>
            <person name="Gocayne J.D."/>
            <person name="Scott J.D."/>
            <person name="Shirley R."/>
            <person name="Liu L.-I."/>
            <person name="Glodek A."/>
            <person name="Kelley J.M."/>
            <person name="Weidman J.F."/>
            <person name="Phillips C.A."/>
            <person name="Spriggs T."/>
            <person name="Hedblom E."/>
            <person name="Cotton M.D."/>
            <person name="Utterback T.R."/>
            <person name="Hanna M.C."/>
            <person name="Nguyen D.T."/>
            <person name="Saudek D.M."/>
            <person name="Brandon R.C."/>
            <person name="Fine L.D."/>
            <person name="Fritchman J.L."/>
            <person name="Fuhrmann J.L."/>
            <person name="Geoghagen N.S.M."/>
            <person name="Gnehm C.L."/>
            <person name="McDonald L.A."/>
            <person name="Small K.V."/>
            <person name="Fraser C.M."/>
            <person name="Smith H.O."/>
            <person name="Venter J.C."/>
        </authorList>
    </citation>
    <scope>NUCLEOTIDE SEQUENCE [LARGE SCALE GENOMIC DNA]</scope>
    <source>
        <strain>ATCC 51907 / DSM 11121 / KW20 / Rd</strain>
    </source>
</reference>
<dbReference type="EMBL" id="U08209">
    <property type="protein sequence ID" value="AAA81948.1"/>
    <property type="molecule type" value="Genomic_DNA"/>
</dbReference>
<dbReference type="EMBL" id="L42023">
    <property type="protein sequence ID" value="AAC21919.1"/>
    <property type="molecule type" value="Genomic_DNA"/>
</dbReference>
<dbReference type="PIR" id="H64057">
    <property type="entry name" value="H64057"/>
</dbReference>
<dbReference type="RefSeq" id="NP_438422.1">
    <property type="nucleotide sequence ID" value="NC_000907.1"/>
</dbReference>
<dbReference type="SMR" id="P43008"/>
<dbReference type="STRING" id="71421.HI_0253"/>
<dbReference type="EnsemblBacteria" id="AAC21919">
    <property type="protein sequence ID" value="AAC21919"/>
    <property type="gene ID" value="HI_0253"/>
</dbReference>
<dbReference type="KEGG" id="hin:HI_0253"/>
<dbReference type="PATRIC" id="fig|71421.8.peg.268"/>
<dbReference type="eggNOG" id="COG0811">
    <property type="taxonomic scope" value="Bacteria"/>
</dbReference>
<dbReference type="HOGENOM" id="CLU_133317_0_0_6"/>
<dbReference type="OrthoDB" id="9805133at2"/>
<dbReference type="PhylomeDB" id="P43008"/>
<dbReference type="BioCyc" id="HINF71421:G1GJ1-267-MONOMER"/>
<dbReference type="Proteomes" id="UP000000579">
    <property type="component" value="Chromosome"/>
</dbReference>
<dbReference type="GO" id="GO:0005886">
    <property type="term" value="C:plasma membrane"/>
    <property type="evidence" value="ECO:0000318"/>
    <property type="project" value="GO_Central"/>
</dbReference>
<dbReference type="GO" id="GO:0017038">
    <property type="term" value="P:protein import"/>
    <property type="evidence" value="ECO:0000318"/>
    <property type="project" value="GO_Central"/>
</dbReference>
<dbReference type="GO" id="GO:0055085">
    <property type="term" value="P:transmembrane transport"/>
    <property type="evidence" value="ECO:0007669"/>
    <property type="project" value="InterPro"/>
</dbReference>
<dbReference type="InterPro" id="IPR050790">
    <property type="entry name" value="ExbB/TolQ_transport"/>
</dbReference>
<dbReference type="InterPro" id="IPR002898">
    <property type="entry name" value="MotA_ExbB_proton_chnl"/>
</dbReference>
<dbReference type="InterPro" id="IPR014172">
    <property type="entry name" value="TonB_ExbB_2"/>
</dbReference>
<dbReference type="NCBIfam" id="TIGR02805">
    <property type="entry name" value="exbB2"/>
    <property type="match status" value="1"/>
</dbReference>
<dbReference type="PANTHER" id="PTHR30625:SF15">
    <property type="entry name" value="BIOPOLYMER TRANSPORT PROTEIN EXBB"/>
    <property type="match status" value="1"/>
</dbReference>
<dbReference type="PANTHER" id="PTHR30625">
    <property type="entry name" value="PROTEIN TOLQ"/>
    <property type="match status" value="1"/>
</dbReference>
<dbReference type="Pfam" id="PF01618">
    <property type="entry name" value="MotA_ExbB"/>
    <property type="match status" value="1"/>
</dbReference>
<evidence type="ECO:0000250" key="1"/>
<evidence type="ECO:0000255" key="2"/>
<evidence type="ECO:0000305" key="3"/>
<gene>
    <name type="primary">exbB</name>
    <name type="ordered locus">HI_0253</name>
</gene>
<protein>
    <recommendedName>
        <fullName>Biopolymer transport protein ExbB</fullName>
    </recommendedName>
</protein>
<keyword id="KW-0997">Cell inner membrane</keyword>
<keyword id="KW-1003">Cell membrane</keyword>
<keyword id="KW-0472">Membrane</keyword>
<keyword id="KW-0653">Protein transport</keyword>
<keyword id="KW-1185">Reference proteome</keyword>
<keyword id="KW-0812">Transmembrane</keyword>
<keyword id="KW-1133">Transmembrane helix</keyword>
<keyword id="KW-0813">Transport</keyword>
<sequence>MVQLFDFLQQYSDYFIIGLLLLMSIIMLAMVIERYLFLRKVSVAHYSTIHALDIDLNRNMTVISTIGANAPYVGLLGTVIGILLTFYQIGHGGGDIDPSVIMLHLSLALKATALGILVAIPSMVFYNGLGRKVEVNRLKWKVLSEQKDKE</sequence>
<feature type="chain" id="PRO_0000145802" description="Biopolymer transport protein ExbB">
    <location>
        <begin position="1"/>
        <end position="150"/>
    </location>
</feature>
<feature type="transmembrane region" description="Helical" evidence="2">
    <location>
        <begin position="12"/>
        <end position="32"/>
    </location>
</feature>
<feature type="transmembrane region" description="Helical" evidence="2">
    <location>
        <begin position="66"/>
        <end position="86"/>
    </location>
</feature>
<feature type="transmembrane region" description="Helical" evidence="2">
    <location>
        <begin position="105"/>
        <end position="125"/>
    </location>
</feature>
<feature type="sequence variant" description="In strain: TN106.">
    <original>V</original>
    <variation>L</variation>
    <location>
        <position position="2"/>
    </location>
</feature>
<feature type="sequence variant" description="In strain: TN106.">
    <original>I</original>
    <variation>V</variation>
    <location>
        <position position="25"/>
    </location>
</feature>
<feature type="sequence variant" description="In strain: TN106.">
    <original>S</original>
    <variation>N</variation>
    <location>
        <position position="42"/>
    </location>
</feature>
<feature type="sequence variant" description="In strain: TN106.">
    <original>R</original>
    <variation>S</variation>
    <location>
        <position position="58"/>
    </location>
</feature>
<feature type="sequence variant" description="In strain: TN106.">
    <original>V</original>
    <variation>E</variation>
    <location>
        <position position="100"/>
    </location>
</feature>
<feature type="sequence variant" description="In strain: TN106.">
    <original>S</original>
    <variation>N</variation>
    <location>
        <position position="144"/>
    </location>
</feature>
<name>EXBB_HAEIN</name>
<proteinExistence type="inferred from homology"/>
<organism>
    <name type="scientific">Haemophilus influenzae (strain ATCC 51907 / DSM 11121 / KW20 / Rd)</name>
    <dbReference type="NCBI Taxonomy" id="71421"/>
    <lineage>
        <taxon>Bacteria</taxon>
        <taxon>Pseudomonadati</taxon>
        <taxon>Pseudomonadota</taxon>
        <taxon>Gammaproteobacteria</taxon>
        <taxon>Pasteurellales</taxon>
        <taxon>Pasteurellaceae</taxon>
        <taxon>Haemophilus</taxon>
    </lineage>
</organism>